<keyword id="KW-0131">Cell cycle</keyword>
<keyword id="KW-0132">Cell division</keyword>
<keyword id="KW-0159">Chromosome partition</keyword>
<keyword id="KW-0963">Cytoplasm</keyword>
<keyword id="KW-1185">Reference proteome</keyword>
<organism>
    <name type="scientific">Brevibacillus brevis (strain 47 / JCM 6285 / NBRC 100599)</name>
    <dbReference type="NCBI Taxonomy" id="358681"/>
    <lineage>
        <taxon>Bacteria</taxon>
        <taxon>Bacillati</taxon>
        <taxon>Bacillota</taxon>
        <taxon>Bacilli</taxon>
        <taxon>Bacillales</taxon>
        <taxon>Paenibacillaceae</taxon>
        <taxon>Brevibacillus</taxon>
    </lineage>
</organism>
<accession>C0ZC77</accession>
<feature type="chain" id="PRO_1000215940" description="Segregation and condensation protein B">
    <location>
        <begin position="1"/>
        <end position="194"/>
    </location>
</feature>
<proteinExistence type="inferred from homology"/>
<sequence length="194" mass="21503">MDYDKLKGVIEGLLFISGDEGIDAKEISEITEVTEEEVIDLIEDMKADFRRAGRGIQIVEVAKAYQLTTLPEHVPYFERLATSPGQSTLSQAALETLAIVAYKQPLTRSEIEEIRGVKCEKALNTLLSKQLIREAGRAEGIGRPILYATTKEFLEHFGLRELGDLPEPPVNLDIEEARLEASALFGKAEEATND</sequence>
<protein>
    <recommendedName>
        <fullName evidence="1">Segregation and condensation protein B</fullName>
    </recommendedName>
</protein>
<evidence type="ECO:0000255" key="1">
    <source>
        <dbReference type="HAMAP-Rule" id="MF_01804"/>
    </source>
</evidence>
<reference key="1">
    <citation type="submission" date="2005-03" db="EMBL/GenBank/DDBJ databases">
        <title>Brevibacillus brevis strain 47, complete genome.</title>
        <authorList>
            <person name="Hosoyama A."/>
            <person name="Yamada R."/>
            <person name="Hongo Y."/>
            <person name="Terui Y."/>
            <person name="Ankai A."/>
            <person name="Masuyama W."/>
            <person name="Sekiguchi M."/>
            <person name="Takeda T."/>
            <person name="Asano K."/>
            <person name="Ohji S."/>
            <person name="Ichikawa N."/>
            <person name="Narita S."/>
            <person name="Aoki N."/>
            <person name="Miura H."/>
            <person name="Matsushita S."/>
            <person name="Sekigawa T."/>
            <person name="Yamagata H."/>
            <person name="Yoshikawa H."/>
            <person name="Udaka S."/>
            <person name="Tanikawa S."/>
            <person name="Fujita N."/>
        </authorList>
    </citation>
    <scope>NUCLEOTIDE SEQUENCE [LARGE SCALE GENOMIC DNA]</scope>
    <source>
        <strain>47 / JCM 6285 / NBRC 100599</strain>
    </source>
</reference>
<comment type="function">
    <text evidence="1">Participates in chromosomal partition during cell division. May act via the formation of a condensin-like complex containing Smc and ScpA that pull DNA away from mid-cell into both cell halves.</text>
</comment>
<comment type="subunit">
    <text evidence="1">Homodimer. Homodimerization may be required to stabilize the binding of ScpA to the Smc head domains. Component of a cohesin-like complex composed of ScpA, ScpB and the Smc homodimer, in which ScpA and ScpB bind to the head domain of Smc. The presence of the three proteins is required for the association of the complex with DNA.</text>
</comment>
<comment type="subcellular location">
    <subcellularLocation>
        <location evidence="1">Cytoplasm</location>
    </subcellularLocation>
    <text evidence="1">Associated with two foci at the outer edges of the nucleoid region in young cells, and at four foci within both cell halves in older cells.</text>
</comment>
<comment type="similarity">
    <text evidence="1">Belongs to the ScpB family.</text>
</comment>
<gene>
    <name evidence="1" type="primary">scpB</name>
    <name type="ordered locus">BBR47_24090</name>
</gene>
<name>SCPB_BREBN</name>
<dbReference type="EMBL" id="AP008955">
    <property type="protein sequence ID" value="BAH43386.1"/>
    <property type="molecule type" value="Genomic_DNA"/>
</dbReference>
<dbReference type="RefSeq" id="WP_012686098.1">
    <property type="nucleotide sequence ID" value="NC_012491.1"/>
</dbReference>
<dbReference type="SMR" id="C0ZC77"/>
<dbReference type="STRING" id="358681.BBR47_24090"/>
<dbReference type="KEGG" id="bbe:BBR47_24090"/>
<dbReference type="eggNOG" id="COG1386">
    <property type="taxonomic scope" value="Bacteria"/>
</dbReference>
<dbReference type="HOGENOM" id="CLU_045647_5_3_9"/>
<dbReference type="Proteomes" id="UP000001877">
    <property type="component" value="Chromosome"/>
</dbReference>
<dbReference type="GO" id="GO:0005737">
    <property type="term" value="C:cytoplasm"/>
    <property type="evidence" value="ECO:0007669"/>
    <property type="project" value="UniProtKB-SubCell"/>
</dbReference>
<dbReference type="GO" id="GO:0051301">
    <property type="term" value="P:cell division"/>
    <property type="evidence" value="ECO:0007669"/>
    <property type="project" value="UniProtKB-KW"/>
</dbReference>
<dbReference type="GO" id="GO:0051304">
    <property type="term" value="P:chromosome separation"/>
    <property type="evidence" value="ECO:0007669"/>
    <property type="project" value="InterPro"/>
</dbReference>
<dbReference type="GO" id="GO:0006260">
    <property type="term" value="P:DNA replication"/>
    <property type="evidence" value="ECO:0007669"/>
    <property type="project" value="UniProtKB-UniRule"/>
</dbReference>
<dbReference type="Gene3D" id="1.10.10.10">
    <property type="entry name" value="Winged helix-like DNA-binding domain superfamily/Winged helix DNA-binding domain"/>
    <property type="match status" value="2"/>
</dbReference>
<dbReference type="HAMAP" id="MF_01804">
    <property type="entry name" value="ScpB"/>
    <property type="match status" value="1"/>
</dbReference>
<dbReference type="InterPro" id="IPR005234">
    <property type="entry name" value="ScpB_csome_segregation"/>
</dbReference>
<dbReference type="InterPro" id="IPR036388">
    <property type="entry name" value="WH-like_DNA-bd_sf"/>
</dbReference>
<dbReference type="InterPro" id="IPR036390">
    <property type="entry name" value="WH_DNA-bd_sf"/>
</dbReference>
<dbReference type="NCBIfam" id="TIGR00281">
    <property type="entry name" value="SMC-Scp complex subunit ScpB"/>
    <property type="match status" value="1"/>
</dbReference>
<dbReference type="PANTHER" id="PTHR34298">
    <property type="entry name" value="SEGREGATION AND CONDENSATION PROTEIN B"/>
    <property type="match status" value="1"/>
</dbReference>
<dbReference type="PANTHER" id="PTHR34298:SF2">
    <property type="entry name" value="SEGREGATION AND CONDENSATION PROTEIN B"/>
    <property type="match status" value="1"/>
</dbReference>
<dbReference type="Pfam" id="PF04079">
    <property type="entry name" value="SMC_ScpB"/>
    <property type="match status" value="1"/>
</dbReference>
<dbReference type="PIRSF" id="PIRSF019345">
    <property type="entry name" value="ScpB"/>
    <property type="match status" value="1"/>
</dbReference>
<dbReference type="SUPFAM" id="SSF46785">
    <property type="entry name" value="Winged helix' DNA-binding domain"/>
    <property type="match status" value="2"/>
</dbReference>